<comment type="function">
    <text evidence="1">Hydrolyzes ribosome-free peptidyl-tRNAs (with 1 or more amino acids incorporated), which drop off the ribosome during protein synthesis, or as a result of ribosome stalling.</text>
</comment>
<comment type="function">
    <text evidence="1">Catalyzes the release of premature peptidyl moieties from peptidyl-tRNA molecules trapped in stalled 50S ribosomal subunits, and thus maintains levels of free tRNAs and 50S ribosomes.</text>
</comment>
<comment type="catalytic activity">
    <reaction evidence="1">
        <text>an N-acyl-L-alpha-aminoacyl-tRNA + H2O = an N-acyl-L-amino acid + a tRNA + H(+)</text>
        <dbReference type="Rhea" id="RHEA:54448"/>
        <dbReference type="Rhea" id="RHEA-COMP:10123"/>
        <dbReference type="Rhea" id="RHEA-COMP:13883"/>
        <dbReference type="ChEBI" id="CHEBI:15377"/>
        <dbReference type="ChEBI" id="CHEBI:15378"/>
        <dbReference type="ChEBI" id="CHEBI:59874"/>
        <dbReference type="ChEBI" id="CHEBI:78442"/>
        <dbReference type="ChEBI" id="CHEBI:138191"/>
        <dbReference type="EC" id="3.1.1.29"/>
    </reaction>
</comment>
<comment type="subunit">
    <text evidence="1">Monomer.</text>
</comment>
<comment type="subcellular location">
    <subcellularLocation>
        <location evidence="1">Cytoplasm</location>
    </subcellularLocation>
</comment>
<comment type="similarity">
    <text evidence="1">Belongs to the PTH family.</text>
</comment>
<sequence length="184" mass="20743">MKLIVGLGNPGEKYAKTKHNVGYWVLDLLAEKLALSFDQKTENGIYVKQPDFILAKPTTFMNKSGDFVEELIKFYKINTQDLMIIYDDMNFEVGQAAIKTTGSAGGQRGMAHIIEKCKTKEIKRLKIGISRGKNAKEYVLSPFLPKDNAKIKLVIEEAANILIFYLSNSFITTIEKFNANKNKV</sequence>
<keyword id="KW-0963">Cytoplasm</keyword>
<keyword id="KW-0378">Hydrolase</keyword>
<keyword id="KW-0694">RNA-binding</keyword>
<keyword id="KW-0820">tRNA-binding</keyword>
<dbReference type="EC" id="3.1.1.29" evidence="1"/>
<dbReference type="EMBL" id="AE017244">
    <property type="protein sequence ID" value="AAZ53578.1"/>
    <property type="molecule type" value="Genomic_DNA"/>
</dbReference>
<dbReference type="RefSeq" id="WP_011290074.1">
    <property type="nucleotide sequence ID" value="NC_007332.1"/>
</dbReference>
<dbReference type="SMR" id="Q4A8G1"/>
<dbReference type="KEGG" id="mhp:MHP7448_0204"/>
<dbReference type="HOGENOM" id="CLU_062456_4_1_14"/>
<dbReference type="Proteomes" id="UP000000553">
    <property type="component" value="Chromosome"/>
</dbReference>
<dbReference type="GO" id="GO:0005737">
    <property type="term" value="C:cytoplasm"/>
    <property type="evidence" value="ECO:0007669"/>
    <property type="project" value="UniProtKB-SubCell"/>
</dbReference>
<dbReference type="GO" id="GO:0004045">
    <property type="term" value="F:peptidyl-tRNA hydrolase activity"/>
    <property type="evidence" value="ECO:0007669"/>
    <property type="project" value="UniProtKB-UniRule"/>
</dbReference>
<dbReference type="GO" id="GO:0000049">
    <property type="term" value="F:tRNA binding"/>
    <property type="evidence" value="ECO:0007669"/>
    <property type="project" value="UniProtKB-UniRule"/>
</dbReference>
<dbReference type="GO" id="GO:0006515">
    <property type="term" value="P:protein quality control for misfolded or incompletely synthesized proteins"/>
    <property type="evidence" value="ECO:0007669"/>
    <property type="project" value="UniProtKB-UniRule"/>
</dbReference>
<dbReference type="GO" id="GO:0072344">
    <property type="term" value="P:rescue of stalled ribosome"/>
    <property type="evidence" value="ECO:0007669"/>
    <property type="project" value="UniProtKB-UniRule"/>
</dbReference>
<dbReference type="CDD" id="cd00462">
    <property type="entry name" value="PTH"/>
    <property type="match status" value="1"/>
</dbReference>
<dbReference type="Gene3D" id="3.40.50.1470">
    <property type="entry name" value="Peptidyl-tRNA hydrolase"/>
    <property type="match status" value="1"/>
</dbReference>
<dbReference type="HAMAP" id="MF_00083">
    <property type="entry name" value="Pept_tRNA_hydro_bact"/>
    <property type="match status" value="1"/>
</dbReference>
<dbReference type="InterPro" id="IPR001328">
    <property type="entry name" value="Pept_tRNA_hydro"/>
</dbReference>
<dbReference type="InterPro" id="IPR018171">
    <property type="entry name" value="Pept_tRNA_hydro_CS"/>
</dbReference>
<dbReference type="InterPro" id="IPR036416">
    <property type="entry name" value="Pept_tRNA_hydro_sf"/>
</dbReference>
<dbReference type="NCBIfam" id="TIGR00447">
    <property type="entry name" value="pth"/>
    <property type="match status" value="1"/>
</dbReference>
<dbReference type="PANTHER" id="PTHR17224">
    <property type="entry name" value="PEPTIDYL-TRNA HYDROLASE"/>
    <property type="match status" value="1"/>
</dbReference>
<dbReference type="PANTHER" id="PTHR17224:SF1">
    <property type="entry name" value="PEPTIDYL-TRNA HYDROLASE"/>
    <property type="match status" value="1"/>
</dbReference>
<dbReference type="Pfam" id="PF01195">
    <property type="entry name" value="Pept_tRNA_hydro"/>
    <property type="match status" value="1"/>
</dbReference>
<dbReference type="SUPFAM" id="SSF53178">
    <property type="entry name" value="Peptidyl-tRNA hydrolase-like"/>
    <property type="match status" value="1"/>
</dbReference>
<dbReference type="PROSITE" id="PS01195">
    <property type="entry name" value="PEPT_TRNA_HYDROL_1"/>
    <property type="match status" value="1"/>
</dbReference>
<protein>
    <recommendedName>
        <fullName evidence="1">Peptidyl-tRNA hydrolase</fullName>
        <shortName evidence="1">Pth</shortName>
        <ecNumber evidence="1">3.1.1.29</ecNumber>
    </recommendedName>
</protein>
<gene>
    <name evidence="1" type="primary">pth</name>
    <name type="ordered locus">MHP7448_0204</name>
</gene>
<proteinExistence type="inferred from homology"/>
<accession>Q4A8G1</accession>
<organism>
    <name type="scientific">Mesomycoplasma hyopneumoniae (strain 7448)</name>
    <name type="common">Mycoplasma hyopneumoniae</name>
    <dbReference type="NCBI Taxonomy" id="262722"/>
    <lineage>
        <taxon>Bacteria</taxon>
        <taxon>Bacillati</taxon>
        <taxon>Mycoplasmatota</taxon>
        <taxon>Mycoplasmoidales</taxon>
        <taxon>Metamycoplasmataceae</taxon>
        <taxon>Mesomycoplasma</taxon>
    </lineage>
</organism>
<evidence type="ECO:0000255" key="1">
    <source>
        <dbReference type="HAMAP-Rule" id="MF_00083"/>
    </source>
</evidence>
<feature type="chain" id="PRO_0000264061" description="Peptidyl-tRNA hydrolase">
    <location>
        <begin position="1"/>
        <end position="184"/>
    </location>
</feature>
<feature type="active site" description="Proton acceptor" evidence="1">
    <location>
        <position position="19"/>
    </location>
</feature>
<feature type="binding site" evidence="1">
    <location>
        <position position="14"/>
    </location>
    <ligand>
        <name>tRNA</name>
        <dbReference type="ChEBI" id="CHEBI:17843"/>
    </ligand>
</feature>
<feature type="binding site" evidence="1">
    <location>
        <position position="60"/>
    </location>
    <ligand>
        <name>tRNA</name>
        <dbReference type="ChEBI" id="CHEBI:17843"/>
    </ligand>
</feature>
<feature type="binding site" evidence="1">
    <location>
        <position position="62"/>
    </location>
    <ligand>
        <name>tRNA</name>
        <dbReference type="ChEBI" id="CHEBI:17843"/>
    </ligand>
</feature>
<feature type="site" description="Discriminates between blocked and unblocked aminoacyl-tRNA" evidence="1">
    <location>
        <position position="9"/>
    </location>
</feature>
<feature type="site" description="Stabilizes the basic form of H active site to accept a proton" evidence="1">
    <location>
        <position position="87"/>
    </location>
</feature>
<name>PTH_MESH7</name>
<reference key="1">
    <citation type="journal article" date="2005" name="J. Bacteriol.">
        <title>Swine and poultry pathogens: the complete genome sequences of two strains of Mycoplasma hyopneumoniae and a strain of Mycoplasma synoviae.</title>
        <authorList>
            <person name="Vasconcelos A.T.R."/>
            <person name="Ferreira H.B."/>
            <person name="Bizarro C.V."/>
            <person name="Bonatto S.L."/>
            <person name="Carvalho M.O."/>
            <person name="Pinto P.M."/>
            <person name="Almeida D.F."/>
            <person name="Almeida L.G.P."/>
            <person name="Almeida R."/>
            <person name="Alves-Junior L."/>
            <person name="Assuncao E.N."/>
            <person name="Azevedo V.A.C."/>
            <person name="Bogo M.R."/>
            <person name="Brigido M.M."/>
            <person name="Brocchi M."/>
            <person name="Burity H.A."/>
            <person name="Camargo A.A."/>
            <person name="Camargo S.S."/>
            <person name="Carepo M.S."/>
            <person name="Carraro D.M."/>
            <person name="de Mattos Cascardo J.C."/>
            <person name="Castro L.A."/>
            <person name="Cavalcanti G."/>
            <person name="Chemale G."/>
            <person name="Collevatti R.G."/>
            <person name="Cunha C.W."/>
            <person name="Dallagiovanna B."/>
            <person name="Dambros B.P."/>
            <person name="Dellagostin O.A."/>
            <person name="Falcao C."/>
            <person name="Fantinatti-Garboggini F."/>
            <person name="Felipe M.S.S."/>
            <person name="Fiorentin L."/>
            <person name="Franco G.R."/>
            <person name="Freitas N.S.A."/>
            <person name="Frias D."/>
            <person name="Grangeiro T.B."/>
            <person name="Grisard E.C."/>
            <person name="Guimaraes C.T."/>
            <person name="Hungria M."/>
            <person name="Jardim S.N."/>
            <person name="Krieger M.A."/>
            <person name="Laurino J.P."/>
            <person name="Lima L.F.A."/>
            <person name="Lopes M.I."/>
            <person name="Loreto E.L.S."/>
            <person name="Madeira H.M.F."/>
            <person name="Manfio G.P."/>
            <person name="Maranhao A.Q."/>
            <person name="Martinkovics C.T."/>
            <person name="Medeiros S.R.B."/>
            <person name="Moreira M.A.M."/>
            <person name="Neiva M."/>
            <person name="Ramalho-Neto C.E."/>
            <person name="Nicolas M.F."/>
            <person name="Oliveira S.C."/>
            <person name="Paixao R.F.C."/>
            <person name="Pedrosa F.O."/>
            <person name="Pena S.D.J."/>
            <person name="Pereira M."/>
            <person name="Pereira-Ferrari L."/>
            <person name="Piffer I."/>
            <person name="Pinto L.S."/>
            <person name="Potrich D.P."/>
            <person name="Salim A.C.M."/>
            <person name="Santos F.R."/>
            <person name="Schmitt R."/>
            <person name="Schneider M.P.C."/>
            <person name="Schrank A."/>
            <person name="Schrank I.S."/>
            <person name="Schuck A.F."/>
            <person name="Seuanez H.N."/>
            <person name="Silva D.W."/>
            <person name="Silva R."/>
            <person name="Silva S.C."/>
            <person name="Soares C.M.A."/>
            <person name="Souza K.R.L."/>
            <person name="Souza R.C."/>
            <person name="Staats C.C."/>
            <person name="Steffens M.B.R."/>
            <person name="Teixeira S.M.R."/>
            <person name="Urmenyi T.P."/>
            <person name="Vainstein M.H."/>
            <person name="Zuccherato L.W."/>
            <person name="Simpson A.J.G."/>
            <person name="Zaha A."/>
        </authorList>
    </citation>
    <scope>NUCLEOTIDE SEQUENCE [LARGE SCALE GENOMIC DNA]</scope>
    <source>
        <strain>7448</strain>
    </source>
</reference>